<name>Y1376_STAAC</name>
<proteinExistence type="inferred from homology"/>
<keyword id="KW-0963">Cytoplasm</keyword>
<sequence>MSNSDLNIERINELAKKKKEVGLTQEEAKEQTALRKAYLESFRKGFKQQIENTKVIDPEGNDVTPEKIKEIQQKRDNKN</sequence>
<reference key="1">
    <citation type="journal article" date="2005" name="J. Bacteriol.">
        <title>Insights on evolution of virulence and resistance from the complete genome analysis of an early methicillin-resistant Staphylococcus aureus strain and a biofilm-producing methicillin-resistant Staphylococcus epidermidis strain.</title>
        <authorList>
            <person name="Gill S.R."/>
            <person name="Fouts D.E."/>
            <person name="Archer G.L."/>
            <person name="Mongodin E.F."/>
            <person name="DeBoy R.T."/>
            <person name="Ravel J."/>
            <person name="Paulsen I.T."/>
            <person name="Kolonay J.F."/>
            <person name="Brinkac L.M."/>
            <person name="Beanan M.J."/>
            <person name="Dodson R.J."/>
            <person name="Daugherty S.C."/>
            <person name="Madupu R."/>
            <person name="Angiuoli S.V."/>
            <person name="Durkin A.S."/>
            <person name="Haft D.H."/>
            <person name="Vamathevan J.J."/>
            <person name="Khouri H."/>
            <person name="Utterback T.R."/>
            <person name="Lee C."/>
            <person name="Dimitrov G."/>
            <person name="Jiang L."/>
            <person name="Qin H."/>
            <person name="Weidman J."/>
            <person name="Tran K."/>
            <person name="Kang K.H."/>
            <person name="Hance I.R."/>
            <person name="Nelson K.E."/>
            <person name="Fraser C.M."/>
        </authorList>
    </citation>
    <scope>NUCLEOTIDE SEQUENCE [LARGE SCALE GENOMIC DNA]</scope>
    <source>
        <strain>COL</strain>
    </source>
</reference>
<protein>
    <recommendedName>
        <fullName evidence="1">UPF0291 protein SACOL1376</fullName>
    </recommendedName>
</protein>
<comment type="subcellular location">
    <subcellularLocation>
        <location evidence="1">Cytoplasm</location>
    </subcellularLocation>
</comment>
<comment type="similarity">
    <text evidence="1">Belongs to the UPF0291 family.</text>
</comment>
<accession>Q5HG78</accession>
<feature type="chain" id="PRO_0000094984" description="UPF0291 protein SACOL1376">
    <location>
        <begin position="1"/>
        <end position="79"/>
    </location>
</feature>
<feature type="region of interest" description="Disordered" evidence="2">
    <location>
        <begin position="56"/>
        <end position="79"/>
    </location>
</feature>
<feature type="compositionally biased region" description="Basic and acidic residues" evidence="2">
    <location>
        <begin position="64"/>
        <end position="79"/>
    </location>
</feature>
<organism>
    <name type="scientific">Staphylococcus aureus (strain COL)</name>
    <dbReference type="NCBI Taxonomy" id="93062"/>
    <lineage>
        <taxon>Bacteria</taxon>
        <taxon>Bacillati</taxon>
        <taxon>Bacillota</taxon>
        <taxon>Bacilli</taxon>
        <taxon>Bacillales</taxon>
        <taxon>Staphylococcaceae</taxon>
        <taxon>Staphylococcus</taxon>
    </lineage>
</organism>
<evidence type="ECO:0000255" key="1">
    <source>
        <dbReference type="HAMAP-Rule" id="MF_01103"/>
    </source>
</evidence>
<evidence type="ECO:0000256" key="2">
    <source>
        <dbReference type="SAM" id="MobiDB-lite"/>
    </source>
</evidence>
<gene>
    <name type="ordered locus">SACOL1376</name>
</gene>
<dbReference type="EMBL" id="CP000046">
    <property type="protein sequence ID" value="AAW36625.1"/>
    <property type="molecule type" value="Genomic_DNA"/>
</dbReference>
<dbReference type="RefSeq" id="WP_000071351.1">
    <property type="nucleotide sequence ID" value="NZ_JBGOFO010000002.1"/>
</dbReference>
<dbReference type="SMR" id="Q5HG78"/>
<dbReference type="KEGG" id="sac:SACOL1376"/>
<dbReference type="HOGENOM" id="CLU_173137_0_2_9"/>
<dbReference type="Proteomes" id="UP000000530">
    <property type="component" value="Chromosome"/>
</dbReference>
<dbReference type="GO" id="GO:0005737">
    <property type="term" value="C:cytoplasm"/>
    <property type="evidence" value="ECO:0007669"/>
    <property type="project" value="UniProtKB-SubCell"/>
</dbReference>
<dbReference type="Gene3D" id="1.10.287.540">
    <property type="entry name" value="Helix hairpin bin"/>
    <property type="match status" value="1"/>
</dbReference>
<dbReference type="HAMAP" id="MF_01103">
    <property type="entry name" value="UPF0291"/>
    <property type="match status" value="1"/>
</dbReference>
<dbReference type="InterPro" id="IPR009242">
    <property type="entry name" value="DUF896"/>
</dbReference>
<dbReference type="PANTHER" id="PTHR37300">
    <property type="entry name" value="UPF0291 PROTEIN CBO2609/CLC_2481"/>
    <property type="match status" value="1"/>
</dbReference>
<dbReference type="PANTHER" id="PTHR37300:SF1">
    <property type="entry name" value="UPF0291 PROTEIN YNZC"/>
    <property type="match status" value="1"/>
</dbReference>
<dbReference type="Pfam" id="PF05979">
    <property type="entry name" value="DUF896"/>
    <property type="match status" value="1"/>
</dbReference>
<dbReference type="SUPFAM" id="SSF158221">
    <property type="entry name" value="YnzC-like"/>
    <property type="match status" value="1"/>
</dbReference>